<keyword id="KW-0002">3D-structure</keyword>
<keyword id="KW-1185">Reference proteome</keyword>
<evidence type="ECO:0000305" key="1"/>
<evidence type="ECO:0007829" key="2">
    <source>
        <dbReference type="PDB" id="2OSO"/>
    </source>
</evidence>
<gene>
    <name type="ordered locus">MJ1460</name>
</gene>
<protein>
    <recommendedName>
        <fullName>Uncharacterized protein MJ1460</fullName>
    </recommendedName>
</protein>
<reference key="1">
    <citation type="journal article" date="1996" name="Science">
        <title>Complete genome sequence of the methanogenic archaeon, Methanococcus jannaschii.</title>
        <authorList>
            <person name="Bult C.J."/>
            <person name="White O."/>
            <person name="Olsen G.J."/>
            <person name="Zhou L."/>
            <person name="Fleischmann R.D."/>
            <person name="Sutton G.G."/>
            <person name="Blake J.A."/>
            <person name="FitzGerald L.M."/>
            <person name="Clayton R.A."/>
            <person name="Gocayne J.D."/>
            <person name="Kerlavage A.R."/>
            <person name="Dougherty B.A."/>
            <person name="Tomb J.-F."/>
            <person name="Adams M.D."/>
            <person name="Reich C.I."/>
            <person name="Overbeek R."/>
            <person name="Kirkness E.F."/>
            <person name="Weinstock K.G."/>
            <person name="Merrick J.M."/>
            <person name="Glodek A."/>
            <person name="Scott J.L."/>
            <person name="Geoghagen N.S.M."/>
            <person name="Weidman J.F."/>
            <person name="Fuhrmann J.L."/>
            <person name="Nguyen D."/>
            <person name="Utterback T.R."/>
            <person name="Kelley J.M."/>
            <person name="Peterson J.D."/>
            <person name="Sadow P.W."/>
            <person name="Hanna M.C."/>
            <person name="Cotton M.D."/>
            <person name="Roberts K.M."/>
            <person name="Hurst M.A."/>
            <person name="Kaine B.P."/>
            <person name="Borodovsky M."/>
            <person name="Klenk H.-P."/>
            <person name="Fraser C.M."/>
            <person name="Smith H.O."/>
            <person name="Woese C.R."/>
            <person name="Venter J.C."/>
        </authorList>
    </citation>
    <scope>NUCLEOTIDE SEQUENCE [LARGE SCALE GENOMIC DNA]</scope>
    <source>
        <strain>ATCC 43067 / DSM 2661 / JAL-1 / JCM 10045 / NBRC 100440</strain>
    </source>
</reference>
<name>Y1460_METJA</name>
<comment type="similarity">
    <text evidence="1">Belongs to the M.jannaschii MJ0150/MJ0739/MJ0745/MJ1460/MJ1642 family.</text>
</comment>
<organism>
    <name type="scientific">Methanocaldococcus jannaschii (strain ATCC 43067 / DSM 2661 / JAL-1 / JCM 10045 / NBRC 100440)</name>
    <name type="common">Methanococcus jannaschii</name>
    <dbReference type="NCBI Taxonomy" id="243232"/>
    <lineage>
        <taxon>Archaea</taxon>
        <taxon>Methanobacteriati</taxon>
        <taxon>Methanobacteriota</taxon>
        <taxon>Methanomada group</taxon>
        <taxon>Methanococci</taxon>
        <taxon>Methanococcales</taxon>
        <taxon>Methanocaldococcaceae</taxon>
        <taxon>Methanocaldococcus</taxon>
    </lineage>
</organism>
<sequence>MAFMEKIFPDILEAIRNEEIIKESKKIPMPYFGLFALVIFDKVKELGSETSLYEIGEEFGKMLSPKNIEELKKIFKLMNFGDLEIDENKILLKNPPYKIKLSNPPYQWVSKEEPIHDFIAGILAGCLEEIFKKKFVVNEVECVSQGKDKCVFEVKEVDELNK</sequence>
<dbReference type="EMBL" id="L77117">
    <property type="protein sequence ID" value="AAB99471.1"/>
    <property type="molecule type" value="Genomic_DNA"/>
</dbReference>
<dbReference type="PIR" id="C64482">
    <property type="entry name" value="C64482"/>
</dbReference>
<dbReference type="PDB" id="2OSD">
    <property type="method" value="X-ray"/>
    <property type="resolution" value="2.30 A"/>
    <property type="chains" value="A=1-162"/>
</dbReference>
<dbReference type="PDB" id="2OSO">
    <property type="method" value="X-ray"/>
    <property type="resolution" value="1.90 A"/>
    <property type="chains" value="A=1-162"/>
</dbReference>
<dbReference type="PDBsum" id="2OSD"/>
<dbReference type="PDBsum" id="2OSO"/>
<dbReference type="SMR" id="Q58855"/>
<dbReference type="STRING" id="243232.MJ_1460"/>
<dbReference type="PaxDb" id="243232-MJ_1460"/>
<dbReference type="DNASU" id="1452364"/>
<dbReference type="EnsemblBacteria" id="AAB99471">
    <property type="protein sequence ID" value="AAB99471"/>
    <property type="gene ID" value="MJ_1460"/>
</dbReference>
<dbReference type="KEGG" id="mja:MJ_1460"/>
<dbReference type="eggNOG" id="arCOG01688">
    <property type="taxonomic scope" value="Archaea"/>
</dbReference>
<dbReference type="HOGENOM" id="CLU_128702_1_0_2"/>
<dbReference type="InParanoid" id="Q58855"/>
<dbReference type="PhylomeDB" id="Q58855"/>
<dbReference type="EvolutionaryTrace" id="Q58855"/>
<dbReference type="Proteomes" id="UP000000805">
    <property type="component" value="Chromosome"/>
</dbReference>
<dbReference type="Gene3D" id="3.30.1380.20">
    <property type="entry name" value="Trafficking protein particle complex subunit 3"/>
    <property type="match status" value="1"/>
</dbReference>
<dbReference type="InterPro" id="IPR024096">
    <property type="entry name" value="NO_sig/Golgi_transp_ligand-bd"/>
</dbReference>
<dbReference type="InterPro" id="IPR004096">
    <property type="entry name" value="V4R"/>
</dbReference>
<dbReference type="PANTHER" id="PTHR35090:SF2">
    <property type="entry name" value="ARSR FAMILY TRANSCRIPTIONAL REGULATOR"/>
    <property type="match status" value="1"/>
</dbReference>
<dbReference type="PANTHER" id="PTHR35090">
    <property type="entry name" value="DNA-DIRECTED RNA POLYMERASE SUBUNIT I"/>
    <property type="match status" value="1"/>
</dbReference>
<dbReference type="Pfam" id="PF02830">
    <property type="entry name" value="V4R"/>
    <property type="match status" value="1"/>
</dbReference>
<dbReference type="SMART" id="SM00989">
    <property type="entry name" value="V4R"/>
    <property type="match status" value="1"/>
</dbReference>
<dbReference type="SUPFAM" id="SSF111126">
    <property type="entry name" value="Ligand-binding domain in the NO signalling and Golgi transport"/>
    <property type="match status" value="1"/>
</dbReference>
<dbReference type="PROSITE" id="PS00092">
    <property type="entry name" value="N6_MTASE"/>
    <property type="match status" value="1"/>
</dbReference>
<feature type="chain" id="PRO_0000107349" description="Uncharacterized protein MJ1460">
    <location>
        <begin position="1"/>
        <end position="162"/>
    </location>
</feature>
<feature type="helix" evidence="2">
    <location>
        <begin position="8"/>
        <end position="14"/>
    </location>
</feature>
<feature type="helix" evidence="2">
    <location>
        <begin position="18"/>
        <end position="23"/>
    </location>
</feature>
<feature type="helix" evidence="2">
    <location>
        <begin position="29"/>
        <end position="43"/>
    </location>
</feature>
<feature type="helix" evidence="2">
    <location>
        <begin position="52"/>
        <end position="63"/>
    </location>
</feature>
<feature type="helix" evidence="2">
    <location>
        <begin position="68"/>
        <end position="77"/>
    </location>
</feature>
<feature type="strand" evidence="2">
    <location>
        <begin position="82"/>
        <end position="84"/>
    </location>
</feature>
<feature type="helix" evidence="2">
    <location>
        <begin position="87"/>
        <end position="92"/>
    </location>
</feature>
<feature type="strand" evidence="2">
    <location>
        <begin position="97"/>
        <end position="103"/>
    </location>
</feature>
<feature type="helix" evidence="2">
    <location>
        <begin position="117"/>
        <end position="131"/>
    </location>
</feature>
<feature type="strand" evidence="2">
    <location>
        <begin position="133"/>
        <end position="141"/>
    </location>
</feature>
<feature type="helix" evidence="2">
    <location>
        <begin position="143"/>
        <end position="145"/>
    </location>
</feature>
<feature type="strand" evidence="2">
    <location>
        <begin position="148"/>
        <end position="157"/>
    </location>
</feature>
<proteinExistence type="evidence at protein level"/>
<accession>Q58855</accession>